<evidence type="ECO:0000250" key="1">
    <source>
        <dbReference type="UniProtKB" id="P11766"/>
    </source>
</evidence>
<evidence type="ECO:0000305" key="2"/>
<dbReference type="EC" id="1.1.1.1" evidence="1"/>
<dbReference type="EC" id="1.1.1.-"/>
<dbReference type="EC" id="1.1.1.284" evidence="1"/>
<dbReference type="EMBL" id="AAFI02000043">
    <property type="protein sequence ID" value="EAL66492.1"/>
    <property type="molecule type" value="Genomic_DNA"/>
</dbReference>
<dbReference type="RefSeq" id="XP_640467.1">
    <property type="nucleotide sequence ID" value="XM_635375.1"/>
</dbReference>
<dbReference type="SMR" id="Q54TC2"/>
<dbReference type="FunCoup" id="Q54TC2">
    <property type="interactions" value="552"/>
</dbReference>
<dbReference type="STRING" id="44689.Q54TC2"/>
<dbReference type="PaxDb" id="44689-DDB0238276"/>
<dbReference type="EnsemblProtists" id="EAL66492">
    <property type="protein sequence ID" value="EAL66492"/>
    <property type="gene ID" value="DDB_G0281865"/>
</dbReference>
<dbReference type="GeneID" id="8623280"/>
<dbReference type="KEGG" id="ddi:DDB_G0281865"/>
<dbReference type="dictyBase" id="DDB_G0281865">
    <property type="gene designation" value="adh5"/>
</dbReference>
<dbReference type="VEuPathDB" id="AmoebaDB:DDB_G0281865"/>
<dbReference type="eggNOG" id="KOG0022">
    <property type="taxonomic scope" value="Eukaryota"/>
</dbReference>
<dbReference type="HOGENOM" id="CLU_026673_14_0_1"/>
<dbReference type="InParanoid" id="Q54TC2"/>
<dbReference type="OMA" id="IKGRSEM"/>
<dbReference type="PhylomeDB" id="Q54TC2"/>
<dbReference type="Reactome" id="R-DDI-2161541">
    <property type="pathway name" value="Abacavir metabolism"/>
</dbReference>
<dbReference type="Reactome" id="R-DDI-5365859">
    <property type="pathway name" value="RA biosynthesis pathway"/>
</dbReference>
<dbReference type="Reactome" id="R-DDI-71384">
    <property type="pathway name" value="Ethanol oxidation"/>
</dbReference>
<dbReference type="PRO" id="PR:Q54TC2"/>
<dbReference type="Proteomes" id="UP000002195">
    <property type="component" value="Chromosome 3"/>
</dbReference>
<dbReference type="GO" id="GO:0005829">
    <property type="term" value="C:cytosol"/>
    <property type="evidence" value="ECO:0000318"/>
    <property type="project" value="GO_Central"/>
</dbReference>
<dbReference type="GO" id="GO:0004022">
    <property type="term" value="F:alcohol dehydrogenase (NAD+) activity"/>
    <property type="evidence" value="ECO:0000250"/>
    <property type="project" value="dictyBase"/>
</dbReference>
<dbReference type="GO" id="GO:0106322">
    <property type="term" value="F:S-(hydroxymethyl)glutathione dehydrogenase (NAD+) activity"/>
    <property type="evidence" value="ECO:0007669"/>
    <property type="project" value="RHEA"/>
</dbReference>
<dbReference type="GO" id="GO:0106321">
    <property type="term" value="F:S-(hydroxymethyl)glutathione dehydrogenase (NADP+) activity"/>
    <property type="evidence" value="ECO:0007669"/>
    <property type="project" value="RHEA"/>
</dbReference>
<dbReference type="GO" id="GO:0051903">
    <property type="term" value="F:S-(hydroxymethyl)glutathione dehydrogenase [NAD(P)+] activity"/>
    <property type="evidence" value="ECO:0000318"/>
    <property type="project" value="GO_Central"/>
</dbReference>
<dbReference type="GO" id="GO:0008270">
    <property type="term" value="F:zinc ion binding"/>
    <property type="evidence" value="ECO:0000250"/>
    <property type="project" value="dictyBase"/>
</dbReference>
<dbReference type="GO" id="GO:0046294">
    <property type="term" value="P:formaldehyde catabolic process"/>
    <property type="evidence" value="ECO:0000318"/>
    <property type="project" value="GO_Central"/>
</dbReference>
<dbReference type="CDD" id="cd08300">
    <property type="entry name" value="alcohol_DH_class_III"/>
    <property type="match status" value="1"/>
</dbReference>
<dbReference type="FunFam" id="3.40.50.720:FF:000003">
    <property type="entry name" value="S-(hydroxymethyl)glutathione dehydrogenase"/>
    <property type="match status" value="1"/>
</dbReference>
<dbReference type="FunFam" id="3.90.180.10:FF:000001">
    <property type="entry name" value="S-(hydroxymethyl)glutathione dehydrogenase"/>
    <property type="match status" value="1"/>
</dbReference>
<dbReference type="Gene3D" id="3.90.180.10">
    <property type="entry name" value="Medium-chain alcohol dehydrogenases, catalytic domain"/>
    <property type="match status" value="1"/>
</dbReference>
<dbReference type="Gene3D" id="3.40.50.720">
    <property type="entry name" value="NAD(P)-binding Rossmann-like Domain"/>
    <property type="match status" value="1"/>
</dbReference>
<dbReference type="InterPro" id="IPR013149">
    <property type="entry name" value="ADH-like_C"/>
</dbReference>
<dbReference type="InterPro" id="IPR013154">
    <property type="entry name" value="ADH-like_N"/>
</dbReference>
<dbReference type="InterPro" id="IPR014183">
    <property type="entry name" value="ADH_3"/>
</dbReference>
<dbReference type="InterPro" id="IPR002328">
    <property type="entry name" value="ADH_Zn_CS"/>
</dbReference>
<dbReference type="InterPro" id="IPR011032">
    <property type="entry name" value="GroES-like_sf"/>
</dbReference>
<dbReference type="InterPro" id="IPR036291">
    <property type="entry name" value="NAD(P)-bd_dom_sf"/>
</dbReference>
<dbReference type="NCBIfam" id="TIGR02818">
    <property type="entry name" value="adh_III_F_hyde"/>
    <property type="match status" value="1"/>
</dbReference>
<dbReference type="PANTHER" id="PTHR43880">
    <property type="entry name" value="ALCOHOL DEHYDROGENASE"/>
    <property type="match status" value="1"/>
</dbReference>
<dbReference type="PANTHER" id="PTHR43880:SF12">
    <property type="entry name" value="ALCOHOL DEHYDROGENASE CLASS-3"/>
    <property type="match status" value="1"/>
</dbReference>
<dbReference type="Pfam" id="PF08240">
    <property type="entry name" value="ADH_N"/>
    <property type="match status" value="1"/>
</dbReference>
<dbReference type="Pfam" id="PF00107">
    <property type="entry name" value="ADH_zinc_N"/>
    <property type="match status" value="1"/>
</dbReference>
<dbReference type="SUPFAM" id="SSF50129">
    <property type="entry name" value="GroES-like"/>
    <property type="match status" value="2"/>
</dbReference>
<dbReference type="SUPFAM" id="SSF51735">
    <property type="entry name" value="NAD(P)-binding Rossmann-fold domains"/>
    <property type="match status" value="1"/>
</dbReference>
<dbReference type="PROSITE" id="PS00059">
    <property type="entry name" value="ADH_ZINC"/>
    <property type="match status" value="1"/>
</dbReference>
<keyword id="KW-0963">Cytoplasm</keyword>
<keyword id="KW-0479">Metal-binding</keyword>
<keyword id="KW-0520">NAD</keyword>
<keyword id="KW-0560">Oxidoreductase</keyword>
<keyword id="KW-1185">Reference proteome</keyword>
<keyword id="KW-0862">Zinc</keyword>
<feature type="chain" id="PRO_0000345023" description="Alcohol dehydrogenase class-3">
    <location>
        <begin position="1"/>
        <end position="379"/>
    </location>
</feature>
<feature type="binding site" evidence="1">
    <location>
        <position position="47"/>
    </location>
    <ligand>
        <name>Zn(2+)</name>
        <dbReference type="ChEBI" id="CHEBI:29105"/>
        <label>1</label>
        <note>catalytic</note>
    </ligand>
</feature>
<feature type="binding site" evidence="1">
    <location>
        <position position="69"/>
    </location>
    <ligand>
        <name>Zn(2+)</name>
        <dbReference type="ChEBI" id="CHEBI:29105"/>
        <label>1</label>
        <note>catalytic</note>
    </ligand>
</feature>
<feature type="binding site" evidence="1">
    <location>
        <position position="99"/>
    </location>
    <ligand>
        <name>Zn(2+)</name>
        <dbReference type="ChEBI" id="CHEBI:29105"/>
        <label>2</label>
    </ligand>
</feature>
<feature type="binding site" evidence="1">
    <location>
        <position position="102"/>
    </location>
    <ligand>
        <name>Zn(2+)</name>
        <dbReference type="ChEBI" id="CHEBI:29105"/>
        <label>2</label>
    </ligand>
</feature>
<feature type="binding site" evidence="1">
    <location>
        <position position="105"/>
    </location>
    <ligand>
        <name>Zn(2+)</name>
        <dbReference type="ChEBI" id="CHEBI:29105"/>
        <label>2</label>
    </ligand>
</feature>
<feature type="binding site" evidence="1">
    <location>
        <position position="113"/>
    </location>
    <ligand>
        <name>Zn(2+)</name>
        <dbReference type="ChEBI" id="CHEBI:29105"/>
        <label>2</label>
    </ligand>
</feature>
<feature type="binding site" evidence="1">
    <location>
        <position position="176"/>
    </location>
    <ligand>
        <name>Zn(2+)</name>
        <dbReference type="ChEBI" id="CHEBI:29105"/>
        <label>1</label>
        <note>catalytic</note>
    </ligand>
</feature>
<organism>
    <name type="scientific">Dictyostelium discoideum</name>
    <name type="common">Social amoeba</name>
    <dbReference type="NCBI Taxonomy" id="44689"/>
    <lineage>
        <taxon>Eukaryota</taxon>
        <taxon>Amoebozoa</taxon>
        <taxon>Evosea</taxon>
        <taxon>Eumycetozoa</taxon>
        <taxon>Dictyostelia</taxon>
        <taxon>Dictyosteliales</taxon>
        <taxon>Dictyosteliaceae</taxon>
        <taxon>Dictyostelium</taxon>
    </lineage>
</organism>
<reference key="1">
    <citation type="journal article" date="2005" name="Nature">
        <title>The genome of the social amoeba Dictyostelium discoideum.</title>
        <authorList>
            <person name="Eichinger L."/>
            <person name="Pachebat J.A."/>
            <person name="Gloeckner G."/>
            <person name="Rajandream M.A."/>
            <person name="Sucgang R."/>
            <person name="Berriman M."/>
            <person name="Song J."/>
            <person name="Olsen R."/>
            <person name="Szafranski K."/>
            <person name="Xu Q."/>
            <person name="Tunggal B."/>
            <person name="Kummerfeld S."/>
            <person name="Madera M."/>
            <person name="Konfortov B.A."/>
            <person name="Rivero F."/>
            <person name="Bankier A.T."/>
            <person name="Lehmann R."/>
            <person name="Hamlin N."/>
            <person name="Davies R."/>
            <person name="Gaudet P."/>
            <person name="Fey P."/>
            <person name="Pilcher K."/>
            <person name="Chen G."/>
            <person name="Saunders D."/>
            <person name="Sodergren E.J."/>
            <person name="Davis P."/>
            <person name="Kerhornou A."/>
            <person name="Nie X."/>
            <person name="Hall N."/>
            <person name="Anjard C."/>
            <person name="Hemphill L."/>
            <person name="Bason N."/>
            <person name="Farbrother P."/>
            <person name="Desany B."/>
            <person name="Just E."/>
            <person name="Morio T."/>
            <person name="Rost R."/>
            <person name="Churcher C.M."/>
            <person name="Cooper J."/>
            <person name="Haydock S."/>
            <person name="van Driessche N."/>
            <person name="Cronin A."/>
            <person name="Goodhead I."/>
            <person name="Muzny D.M."/>
            <person name="Mourier T."/>
            <person name="Pain A."/>
            <person name="Lu M."/>
            <person name="Harper D."/>
            <person name="Lindsay R."/>
            <person name="Hauser H."/>
            <person name="James K.D."/>
            <person name="Quiles M."/>
            <person name="Madan Babu M."/>
            <person name="Saito T."/>
            <person name="Buchrieser C."/>
            <person name="Wardroper A."/>
            <person name="Felder M."/>
            <person name="Thangavelu M."/>
            <person name="Johnson D."/>
            <person name="Knights A."/>
            <person name="Loulseged H."/>
            <person name="Mungall K.L."/>
            <person name="Oliver K."/>
            <person name="Price C."/>
            <person name="Quail M.A."/>
            <person name="Urushihara H."/>
            <person name="Hernandez J."/>
            <person name="Rabbinowitsch E."/>
            <person name="Steffen D."/>
            <person name="Sanders M."/>
            <person name="Ma J."/>
            <person name="Kohara Y."/>
            <person name="Sharp S."/>
            <person name="Simmonds M.N."/>
            <person name="Spiegler S."/>
            <person name="Tivey A."/>
            <person name="Sugano S."/>
            <person name="White B."/>
            <person name="Walker D."/>
            <person name="Woodward J.R."/>
            <person name="Winckler T."/>
            <person name="Tanaka Y."/>
            <person name="Shaulsky G."/>
            <person name="Schleicher M."/>
            <person name="Weinstock G.M."/>
            <person name="Rosenthal A."/>
            <person name="Cox E.C."/>
            <person name="Chisholm R.L."/>
            <person name="Gibbs R.A."/>
            <person name="Loomis W.F."/>
            <person name="Platzer M."/>
            <person name="Kay R.R."/>
            <person name="Williams J.G."/>
            <person name="Dear P.H."/>
            <person name="Noegel A.A."/>
            <person name="Barrell B.G."/>
            <person name="Kuspa A."/>
        </authorList>
    </citation>
    <scope>NUCLEOTIDE SEQUENCE [LARGE SCALE GENOMIC DNA]</scope>
    <source>
        <strain>AX4</strain>
    </source>
</reference>
<accession>Q54TC2</accession>
<protein>
    <recommendedName>
        <fullName>Alcohol dehydrogenase class-3</fullName>
        <ecNumber evidence="1">1.1.1.1</ecNumber>
    </recommendedName>
    <alternativeName>
        <fullName>Alcohol dehydrogenase class-III</fullName>
    </alternativeName>
    <alternativeName>
        <fullName>Glutathione-dependent formaldehyde dehydrogenase</fullName>
        <shortName>FALDH</shortName>
        <shortName>FDH</shortName>
        <shortName>GSH-FDH</shortName>
        <ecNumber>1.1.1.-</ecNumber>
    </alternativeName>
    <alternativeName>
        <fullName>S-(hydroxymethyl)glutathione dehydrogenase</fullName>
        <ecNumber evidence="1">1.1.1.284</ecNumber>
    </alternativeName>
</protein>
<proteinExistence type="inferred from homology"/>
<sequence length="379" mass="40553">MSTEGKVITCKAAVAWEAKKPLVIEDIEVQPPQKGEVRIKILYTGVCHTDSYTLSGSDPEGIFPCILGHEGGGIVESIGEGVTSVKVGDHVIPLYIPECGTCKFCTSNKTNLCSKIRITQGKGQMPDGTTRFKCKGKEIFHFMGTSTFSQYTVLPEISCCVVREDAPLDKVCLLGCGITTGFGAAKITAKVEEGSTVAIFGLGAVGLSVAQGAVDCGAKRIIGIDNNETKFGPGKDFGCTEFINPSKDLPEGKTIQQHLVDITDGGVDYSFECIGNVNVMRAALECCHKGWGVSTIVGVAPAGAEISTRPFQLVTGRVWKGSAFGGVKSRSQLPSIIDKYMDKKLKVDEYVTFTYPLNEINTAFDVMHEGKSLRSVVNL</sequence>
<gene>
    <name type="primary">adh5</name>
    <name type="ORF">DDB_G0281865</name>
</gene>
<name>ADHX_DICDI</name>
<comment type="function">
    <text evidence="1">Class-III ADH is remarkably ineffective in oxidizing ethanol, but it readily catalyzes the oxidation of long-chain primary alcohols and the oxidation of S-(hydroxymethyl) glutathione.</text>
</comment>
<comment type="catalytic activity">
    <reaction evidence="1">
        <text>a primary alcohol + NAD(+) = an aldehyde + NADH + H(+)</text>
        <dbReference type="Rhea" id="RHEA:10736"/>
        <dbReference type="ChEBI" id="CHEBI:15378"/>
        <dbReference type="ChEBI" id="CHEBI:15734"/>
        <dbReference type="ChEBI" id="CHEBI:17478"/>
        <dbReference type="ChEBI" id="CHEBI:57540"/>
        <dbReference type="ChEBI" id="CHEBI:57945"/>
        <dbReference type="EC" id="1.1.1.1"/>
    </reaction>
</comment>
<comment type="catalytic activity">
    <reaction evidence="1">
        <text>a secondary alcohol + NAD(+) = a ketone + NADH + H(+)</text>
        <dbReference type="Rhea" id="RHEA:10740"/>
        <dbReference type="ChEBI" id="CHEBI:15378"/>
        <dbReference type="ChEBI" id="CHEBI:17087"/>
        <dbReference type="ChEBI" id="CHEBI:35681"/>
        <dbReference type="ChEBI" id="CHEBI:57540"/>
        <dbReference type="ChEBI" id="CHEBI:57945"/>
        <dbReference type="EC" id="1.1.1.1"/>
    </reaction>
</comment>
<comment type="catalytic activity">
    <reaction evidence="1">
        <text>S-(hydroxymethyl)glutathione + NADP(+) = S-formylglutathione + NADPH + H(+)</text>
        <dbReference type="Rhea" id="RHEA:19981"/>
        <dbReference type="ChEBI" id="CHEBI:15378"/>
        <dbReference type="ChEBI" id="CHEBI:57688"/>
        <dbReference type="ChEBI" id="CHEBI:57783"/>
        <dbReference type="ChEBI" id="CHEBI:58349"/>
        <dbReference type="ChEBI" id="CHEBI:58758"/>
        <dbReference type="EC" id="1.1.1.284"/>
    </reaction>
</comment>
<comment type="catalytic activity">
    <reaction evidence="1">
        <text>S-(hydroxymethyl)glutathione + NAD(+) = S-formylglutathione + NADH + H(+)</text>
        <dbReference type="Rhea" id="RHEA:19985"/>
        <dbReference type="ChEBI" id="CHEBI:15378"/>
        <dbReference type="ChEBI" id="CHEBI:57540"/>
        <dbReference type="ChEBI" id="CHEBI:57688"/>
        <dbReference type="ChEBI" id="CHEBI:57945"/>
        <dbReference type="ChEBI" id="CHEBI:58758"/>
        <dbReference type="EC" id="1.1.1.284"/>
    </reaction>
</comment>
<comment type="cofactor">
    <cofactor evidence="1">
        <name>Zn(2+)</name>
        <dbReference type="ChEBI" id="CHEBI:29105"/>
    </cofactor>
    <text evidence="1">Binds 2 Zn(2+) ions per subunit.</text>
</comment>
<comment type="subunit">
    <text evidence="1">Homodimer.</text>
</comment>
<comment type="subcellular location">
    <subcellularLocation>
        <location evidence="2">Cytoplasm</location>
    </subcellularLocation>
</comment>
<comment type="similarity">
    <text evidence="2">Belongs to the zinc-containing alcohol dehydrogenase family. Class-III subfamily.</text>
</comment>